<name>PHOP_ECOLI</name>
<comment type="function">
    <text evidence="1 4">Member of the two-component regulatory system PhoP/PhoQ involved in adaptation to low Mg(2+) environments and the control of acid resistance genes. In low periplasmic Mg(2+), PhoQ phosphorylates PhoP, resulting in the expression of PhoP-activated genes (PAG) and repression of PhoP-repressed genes (PRG). In high periplasmic Mg(2+), PhoQ dephosphorylates phospho-PhoP, resulting in the repression of PAG and may lead to expression of some PRG (By similarity). Mediates magnesium influx to the cytosol by activation of MgtA. Promotes expression of the two-component regulatory system rstA/rstB and transcription of the hemL, mgrB, nagA, slyB, vboR and yrbL genes.</text>
</comment>
<comment type="activity regulation">
    <text evidence="6 7">Feedback inhibited by MgrB, which seems to bind PhoQ, altering its activity and that of downstream effector PhoP. PhoP-regulated transcription is redox-sensitive, being activated when the periplasm becomes more reducing (deletion of dsbA/dsbB, or treatment with dithiothreitol). MgrB acts between DsbA/DsbB and PhoP/PhoQ in this pathway.</text>
</comment>
<comment type="subunit">
    <text evidence="9">Monomer in the inactive, unphosphorylated state and dimer in the active, phosphorylated state.</text>
</comment>
<comment type="interaction">
    <interactant intactId="EBI-1121453">
        <id>P23836</id>
    </interactant>
    <interactant intactId="EBI-1121453">
        <id>P23836</id>
        <label>phoP</label>
    </interactant>
    <organismsDiffer>false</organismsDiffer>
    <experiments>5</experiments>
</comment>
<comment type="subcellular location">
    <subcellularLocation>
        <location evidence="8">Cytoplasm</location>
    </subcellularLocation>
</comment>
<comment type="induction">
    <text evidence="4 7">The phoP/phoQ operon is positively autoregulated by both PhoP and PhoQ in a Mg(2+)-dependent manner, inhibited at high Mg(2+) concentrations (PubMed:10464230). Induced by dsbA disruption and dithiothreitol (PubMed:22267510).</text>
</comment>
<comment type="PTM">
    <text evidence="8">Phosphorylated by PhoQ.</text>
</comment>
<comment type="disruption phenotype">
    <text evidence="5">Altered expression of 33 genes; 9 are down-regulated, the rest up-regulated.</text>
</comment>
<comment type="miscellaneous">
    <text>There is a close linkage between the Rcs and PhoQ/P signaling systems, and both signaling systems respond to certain external divalent cations (zinc and magnesium).</text>
</comment>
<comment type="miscellaneous">
    <text>Two-component regulatory system EvgA/EvgS interacts with PhoP/PhoQ via signal transduction mediated by phospho-EvgA.</text>
</comment>
<accession>P23836</accession>
<sequence>MRVLVVEDNALLRHHLKVQIQDAGHQVDDAEDAKEADYYLNEHIPDIAIVDLGLPDEDGLSLIRRWRSNDVSLPILVLTARESWQDKVEVLSAGADDYVTKPFHIEEVMARMQALMRRNSGLASQVISLPPFQVDLSRRELSINDEVIKLTAFEYTIMETLIRNNGKVVSKDSLMLQLYPDAELRESHTIDVLMGRLRKKIQAQYPQEVITTVRGQGYLFELR</sequence>
<evidence type="ECO:0000250" key="1"/>
<evidence type="ECO:0000255" key="2">
    <source>
        <dbReference type="PROSITE-ProRule" id="PRU00169"/>
    </source>
</evidence>
<evidence type="ECO:0000255" key="3">
    <source>
        <dbReference type="PROSITE-ProRule" id="PRU01091"/>
    </source>
</evidence>
<evidence type="ECO:0000269" key="4">
    <source>
    </source>
</evidence>
<evidence type="ECO:0000269" key="5">
    <source>
    </source>
</evidence>
<evidence type="ECO:0000269" key="6">
    <source>
    </source>
</evidence>
<evidence type="ECO:0000269" key="7">
    <source>
    </source>
</evidence>
<evidence type="ECO:0000305" key="8"/>
<evidence type="ECO:0000305" key="9">
    <source>
    </source>
</evidence>
<evidence type="ECO:0007829" key="10">
    <source>
        <dbReference type="PDB" id="2PL1"/>
    </source>
</evidence>
<feature type="chain" id="PRO_0000081195" description="Transcriptional regulatory protein PhoP">
    <location>
        <begin position="1"/>
        <end position="223"/>
    </location>
</feature>
<feature type="domain" description="Response regulatory" evidence="2">
    <location>
        <begin position="2"/>
        <end position="116"/>
    </location>
</feature>
<feature type="DNA-binding region" description="OmpR/PhoB-type" evidence="3">
    <location>
        <begin position="124"/>
        <end position="222"/>
    </location>
</feature>
<feature type="modified residue" description="4-aspartylphosphate" evidence="2">
    <location>
        <position position="51"/>
    </location>
</feature>
<feature type="strand" evidence="10">
    <location>
        <begin position="2"/>
        <end position="6"/>
    </location>
</feature>
<feature type="helix" evidence="10">
    <location>
        <begin position="10"/>
        <end position="22"/>
    </location>
</feature>
<feature type="strand" evidence="10">
    <location>
        <begin position="26"/>
        <end position="32"/>
    </location>
</feature>
<feature type="helix" evidence="10">
    <location>
        <begin position="33"/>
        <end position="42"/>
    </location>
</feature>
<feature type="strand" evidence="10">
    <location>
        <begin position="46"/>
        <end position="50"/>
    </location>
</feature>
<feature type="strand" evidence="10">
    <location>
        <begin position="55"/>
        <end position="57"/>
    </location>
</feature>
<feature type="helix" evidence="10">
    <location>
        <begin position="59"/>
        <end position="68"/>
    </location>
</feature>
<feature type="strand" evidence="10">
    <location>
        <begin position="75"/>
        <end position="80"/>
    </location>
</feature>
<feature type="helix" evidence="10">
    <location>
        <begin position="84"/>
        <end position="92"/>
    </location>
</feature>
<feature type="strand" evidence="10">
    <location>
        <begin position="96"/>
        <end position="102"/>
    </location>
</feature>
<feature type="helix" evidence="10">
    <location>
        <begin position="105"/>
        <end position="119"/>
    </location>
</feature>
<protein>
    <recommendedName>
        <fullName>Transcriptional regulatory protein PhoP</fullName>
    </recommendedName>
</protein>
<organism>
    <name type="scientific">Escherichia coli (strain K12)</name>
    <dbReference type="NCBI Taxonomy" id="83333"/>
    <lineage>
        <taxon>Bacteria</taxon>
        <taxon>Pseudomonadati</taxon>
        <taxon>Pseudomonadota</taxon>
        <taxon>Gammaproteobacteria</taxon>
        <taxon>Enterobacterales</taxon>
        <taxon>Enterobacteriaceae</taxon>
        <taxon>Escherichia</taxon>
    </lineage>
</organism>
<proteinExistence type="evidence at protein level"/>
<gene>
    <name type="primary">phoP</name>
    <name type="ordered locus">b1130</name>
    <name type="ordered locus">JW1116</name>
</gene>
<reference key="1">
    <citation type="journal article" date="1992" name="J. Bacteriol.">
        <title>Molecular analysis of the Escherichia coli phoP-phoQ operon.</title>
        <authorList>
            <person name="Kasahara M."/>
            <person name="Nakata A."/>
            <person name="Shinagawa H."/>
        </authorList>
    </citation>
    <scope>NUCLEOTIDE SEQUENCE [GENOMIC DNA]</scope>
    <source>
        <strain>K12</strain>
    </source>
</reference>
<reference key="2">
    <citation type="journal article" date="1992" name="J. Bacteriol.">
        <title>Molecular genetic analysis of the Escherichia coli phoP locus.</title>
        <authorList>
            <person name="Groisman E.A."/>
            <person name="Heffron F."/>
            <person name="Solomon F."/>
        </authorList>
    </citation>
    <scope>NUCLEOTIDE SEQUENCE [GENOMIC DNA]</scope>
</reference>
<reference key="3">
    <citation type="journal article" date="1996" name="DNA Res.">
        <title>A 718-kb DNA sequence of the Escherichia coli K-12 genome corresponding to the 12.7-28.0 min region on the linkage map.</title>
        <authorList>
            <person name="Oshima T."/>
            <person name="Aiba H."/>
            <person name="Baba T."/>
            <person name="Fujita K."/>
            <person name="Hayashi K."/>
            <person name="Honjo A."/>
            <person name="Ikemoto K."/>
            <person name="Inada T."/>
            <person name="Itoh T."/>
            <person name="Kajihara M."/>
            <person name="Kanai K."/>
            <person name="Kashimoto K."/>
            <person name="Kimura S."/>
            <person name="Kitagawa M."/>
            <person name="Makino K."/>
            <person name="Masuda S."/>
            <person name="Miki T."/>
            <person name="Mizobuchi K."/>
            <person name="Mori H."/>
            <person name="Motomura K."/>
            <person name="Nakamura Y."/>
            <person name="Nashimoto H."/>
            <person name="Nishio Y."/>
            <person name="Saito N."/>
            <person name="Sampei G."/>
            <person name="Seki Y."/>
            <person name="Tagami H."/>
            <person name="Takemoto K."/>
            <person name="Wada C."/>
            <person name="Yamamoto Y."/>
            <person name="Yano M."/>
            <person name="Horiuchi T."/>
        </authorList>
    </citation>
    <scope>NUCLEOTIDE SEQUENCE [LARGE SCALE GENOMIC DNA]</scope>
    <source>
        <strain>K12 / W3110 / ATCC 27325 / DSM 5911</strain>
    </source>
</reference>
<reference key="4">
    <citation type="journal article" date="1997" name="Science">
        <title>The complete genome sequence of Escherichia coli K-12.</title>
        <authorList>
            <person name="Blattner F.R."/>
            <person name="Plunkett G. III"/>
            <person name="Bloch C.A."/>
            <person name="Perna N.T."/>
            <person name="Burland V."/>
            <person name="Riley M."/>
            <person name="Collado-Vides J."/>
            <person name="Glasner J.D."/>
            <person name="Rode C.K."/>
            <person name="Mayhew G.F."/>
            <person name="Gregor J."/>
            <person name="Davis N.W."/>
            <person name="Kirkpatrick H.A."/>
            <person name="Goeden M.A."/>
            <person name="Rose D.J."/>
            <person name="Mau B."/>
            <person name="Shao Y."/>
        </authorList>
    </citation>
    <scope>NUCLEOTIDE SEQUENCE [LARGE SCALE GENOMIC DNA]</scope>
    <source>
        <strain>K12 / MG1655 / ATCC 47076</strain>
    </source>
</reference>
<reference key="5">
    <citation type="journal article" date="2006" name="Mol. Syst. Biol.">
        <title>Highly accurate genome sequences of Escherichia coli K-12 strains MG1655 and W3110.</title>
        <authorList>
            <person name="Hayashi K."/>
            <person name="Morooka N."/>
            <person name="Yamamoto Y."/>
            <person name="Fujita K."/>
            <person name="Isono K."/>
            <person name="Choi S."/>
            <person name="Ohtsubo E."/>
            <person name="Baba T."/>
            <person name="Wanner B.L."/>
            <person name="Mori H."/>
            <person name="Horiuchi T."/>
        </authorList>
    </citation>
    <scope>NUCLEOTIDE SEQUENCE [LARGE SCALE GENOMIC DNA]</scope>
    <source>
        <strain>K12 / W3110 / ATCC 27325 / DSM 5911</strain>
    </source>
</reference>
<reference key="6">
    <citation type="journal article" date="1992" name="J. Bacteriol.">
        <title>Escherichia coli purB gene: cloning, nucleotide sequence, and regulation by purR.</title>
        <authorList>
            <person name="He B."/>
            <person name="Smith J.M."/>
            <person name="Zalkin H."/>
        </authorList>
    </citation>
    <scope>NUCLEOTIDE SEQUENCE [GENOMIC DNA] OF 1-50</scope>
    <source>
        <strain>K12</strain>
    </source>
</reference>
<reference key="7">
    <citation type="submission" date="1991-05" db="EMBL/GenBank/DDBJ databases">
        <authorList>
            <person name="Green S.M."/>
            <person name="Drabble W.T."/>
        </authorList>
    </citation>
    <scope>NUCLEOTIDE SEQUENCE [GENOMIC DNA] OF 1-24</scope>
    <source>
        <strain>K12</strain>
    </source>
</reference>
<reference key="8">
    <citation type="journal article" date="2002" name="Mol. Microbiol.">
        <title>Novel mode of transcription regulation of divergently overlapping promoters by PhoP, the regulator of two-component system sensing external magnesium availability.</title>
        <authorList>
            <person name="Yamamoto K."/>
            <person name="Ogasawara H."/>
            <person name="Fujita N."/>
            <person name="Utsumi R."/>
            <person name="Ishihama A."/>
        </authorList>
    </citation>
    <scope>PROTEIN SEQUENCE OF 1-7 AND 119-125</scope>
    <source>
        <strain>K12 / W3110 / ATCC 27325 / DSM 5911</strain>
    </source>
</reference>
<reference key="9">
    <citation type="journal article" date="1997" name="Electrophoresis">
        <title>Escherichia coli proteome analysis using the gene-protein database.</title>
        <authorList>
            <person name="VanBogelen R.A."/>
            <person name="Abshire K.Z."/>
            <person name="Moldover B."/>
            <person name="Olson E.R."/>
            <person name="Neidhardt F.C."/>
        </authorList>
    </citation>
    <scope>IDENTIFICATION BY 2D-GEL</scope>
</reference>
<reference key="10">
    <citation type="journal article" date="1999" name="J. Bacteriol.">
        <title>Molecular characterization of the PhoP-PhoQ two-component system in Escherichia coli K-12: identification of extracellular Mg2+-responsive promoters.</title>
        <authorList>
            <person name="Kato A."/>
            <person name="Tanabe H."/>
            <person name="Utsumi R."/>
        </authorList>
    </citation>
    <scope>FUNCTION</scope>
    <scope>INDUCTION BY LOW MG(2+)</scope>
    <source>
        <strain>K12 / MC4100 / JA176</strain>
    </source>
</reference>
<reference key="11">
    <citation type="journal article" date="2003" name="J. Bacteriol.">
        <title>Identification and molecular characterization of the Mg2+ stimulon of Escherichia coli.</title>
        <authorList>
            <person name="Minagawa S."/>
            <person name="Ogasawara H."/>
            <person name="Kato A."/>
            <person name="Yamamoto K."/>
            <person name="Eguchi Y."/>
            <person name="Oshima T."/>
            <person name="Mori H."/>
            <person name="Ishihama A."/>
            <person name="Utsumi R."/>
        </authorList>
    </citation>
    <scope>GENOME-WIDE ANALYSIS</scope>
    <scope>REGULATION BY MG(2+)</scope>
    <source>
        <strain>K12 / MC4100 / JA176</strain>
    </source>
</reference>
<reference key="12">
    <citation type="journal article" date="2003" name="J. Bacteriol.">
        <title>Genome-wide analyses revealing a signaling network of the RcsC-YojN-RcsB phosphorelay system in Escherichia coli.</title>
        <authorList>
            <person name="Hagiwara D."/>
            <person name="Sugiura M."/>
            <person name="Oshima T."/>
            <person name="Mori H."/>
            <person name="Aiba H."/>
            <person name="Yamashino T."/>
            <person name="Mizuno T."/>
        </authorList>
    </citation>
    <scope>GENOME-WIDE ANALYSIS</scope>
    <source>
        <strain>K12 / ST001</strain>
    </source>
</reference>
<reference key="13">
    <citation type="journal article" date="2004" name="J. Bacteriol.">
        <title>Signal transduction cascade between EvgA/EvgS and PhoP/PhoQ two-component systems of Escherichia coli.</title>
        <authorList>
            <person name="Eguchi Y."/>
            <person name="Okada T."/>
            <person name="Minagawa S."/>
            <person name="Oshima T."/>
            <person name="Mori H."/>
            <person name="Yamamoto K."/>
            <person name="Ishihama A."/>
            <person name="Utsumi R."/>
        </authorList>
    </citation>
    <scope>INTERACTION WITH EVGA/EVGS</scope>
    <source>
        <strain>K12 / MC4100 / JA176</strain>
    </source>
</reference>
<reference key="14">
    <citation type="journal article" date="2005" name="Proc. Natl. Acad. Sci. U.S.A.">
        <title>Dissecting the PhoP regulatory network of Escherichia coli and Salmonella enterica.</title>
        <authorList>
            <person name="Zwir I."/>
            <person name="Shin D."/>
            <person name="Kato A."/>
            <person name="Nishino K."/>
            <person name="Latifi T."/>
            <person name="Solomon F."/>
            <person name="Hare J.M."/>
            <person name="Huang H."/>
            <person name="Groisman E.A."/>
        </authorList>
    </citation>
    <scope>ANALYSIS OF PHOP REGULATORY NETWORK</scope>
    <scope>DISRUPTION PHENOTYPE</scope>
    <source>
        <strain>K12 / MG1655 / ATCC 47076</strain>
    </source>
</reference>
<reference key="15">
    <citation type="journal article" date="2009" name="PLoS Genet.">
        <title>Feedback inhibition in the PhoQ/PhoP signaling system by a membrane peptide.</title>
        <authorList>
            <person name="Lippa A.M."/>
            <person name="Goulian M."/>
        </authorList>
    </citation>
    <scope>ACTIVITY REGULATION</scope>
    <source>
        <strain>K12 / MG1655 / ATCC 47076</strain>
    </source>
</reference>
<reference key="16">
    <citation type="journal article" date="2012" name="J. Bacteriol.">
        <title>Perturbation of the oxidizing environment of the periplasm stimulates the PhoQ/PhoP system in Escherichia coli.</title>
        <authorList>
            <person name="Lippa A.M."/>
            <person name="Goulian M."/>
        </authorList>
    </citation>
    <scope>ACTIVITY REGULATION</scope>
    <scope>INDUCTION</scope>
    <source>
        <strain>K12 / MG1655 / ATCC 47076</strain>
    </source>
</reference>
<reference key="17">
    <citation type="journal article" date="2007" name="J. Bacteriol.">
        <title>Crystal structures of the receiver domain of the response regulator PhoP from Escherichia coli in the absence and presence of the phosphoryl analog beryllofluoride.</title>
        <authorList>
            <person name="Bachhawat P."/>
            <person name="Stock A.M."/>
        </authorList>
    </citation>
    <scope>X-RAY CRYSTALLOGRAPHY (1.9 ANGSTROMS) OF 1-120 IN THE PRESENCE AND LACK OF PHOSPHORYLATION ANALOG</scope>
    <scope>SUBUNIT</scope>
</reference>
<dbReference type="EMBL" id="D90393">
    <property type="protein sequence ID" value="BAA14390.1"/>
    <property type="molecule type" value="Genomic_DNA"/>
</dbReference>
<dbReference type="EMBL" id="M81433">
    <property type="protein sequence ID" value="AAA24377.1"/>
    <property type="molecule type" value="Genomic_DNA"/>
</dbReference>
<dbReference type="EMBL" id="U00096">
    <property type="protein sequence ID" value="AAC74214.1"/>
    <property type="molecule type" value="Genomic_DNA"/>
</dbReference>
<dbReference type="EMBL" id="AP009048">
    <property type="protein sequence ID" value="BAA35952.1"/>
    <property type="molecule type" value="Genomic_DNA"/>
</dbReference>
<dbReference type="EMBL" id="M74924">
    <property type="protein sequence ID" value="AAA92732.1"/>
    <property type="molecule type" value="Genomic_DNA"/>
</dbReference>
<dbReference type="EMBL" id="X59307">
    <property type="protein sequence ID" value="CAA41997.1"/>
    <property type="molecule type" value="Genomic_DNA"/>
</dbReference>
<dbReference type="PIR" id="A41965">
    <property type="entry name" value="A41965"/>
</dbReference>
<dbReference type="RefSeq" id="NP_415648.1">
    <property type="nucleotide sequence ID" value="NC_000913.3"/>
</dbReference>
<dbReference type="RefSeq" id="WP_001265471.1">
    <property type="nucleotide sequence ID" value="NZ_STEB01000016.1"/>
</dbReference>
<dbReference type="PDB" id="2PKX">
    <property type="method" value="X-ray"/>
    <property type="resolution" value="2.54 A"/>
    <property type="chains" value="A/B=1-121"/>
</dbReference>
<dbReference type="PDB" id="2PL1">
    <property type="method" value="X-ray"/>
    <property type="resolution" value="1.90 A"/>
    <property type="chains" value="A=1-121"/>
</dbReference>
<dbReference type="PDBsum" id="2PKX"/>
<dbReference type="PDBsum" id="2PL1"/>
<dbReference type="SMR" id="P23836"/>
<dbReference type="BioGRID" id="4260094">
    <property type="interactions" value="171"/>
</dbReference>
<dbReference type="BioGRID" id="850069">
    <property type="interactions" value="1"/>
</dbReference>
<dbReference type="DIP" id="DIP-10500N"/>
<dbReference type="FunCoup" id="P23836">
    <property type="interactions" value="239"/>
</dbReference>
<dbReference type="IntAct" id="P23836">
    <property type="interactions" value="6"/>
</dbReference>
<dbReference type="STRING" id="511145.b1130"/>
<dbReference type="iPTMnet" id="P23836"/>
<dbReference type="jPOST" id="P23836"/>
<dbReference type="PaxDb" id="511145-b1130"/>
<dbReference type="EnsemblBacteria" id="AAC74214">
    <property type="protein sequence ID" value="AAC74214"/>
    <property type="gene ID" value="b1130"/>
</dbReference>
<dbReference type="GeneID" id="945697"/>
<dbReference type="KEGG" id="ecj:JW1116"/>
<dbReference type="KEGG" id="eco:b1130"/>
<dbReference type="KEGG" id="ecoc:C3026_06800"/>
<dbReference type="PATRIC" id="fig|1411691.4.peg.1136"/>
<dbReference type="EchoBASE" id="EB0724"/>
<dbReference type="eggNOG" id="COG0745">
    <property type="taxonomic scope" value="Bacteria"/>
</dbReference>
<dbReference type="HOGENOM" id="CLU_000445_30_1_6"/>
<dbReference type="InParanoid" id="P23836"/>
<dbReference type="OMA" id="SYPRRVW"/>
<dbReference type="OrthoDB" id="9802426at2"/>
<dbReference type="PhylomeDB" id="P23836"/>
<dbReference type="BioCyc" id="EcoCyc:PHOP-MONOMER"/>
<dbReference type="EvolutionaryTrace" id="P23836"/>
<dbReference type="PHI-base" id="PHI:10955"/>
<dbReference type="PRO" id="PR:P23836"/>
<dbReference type="Proteomes" id="UP000000625">
    <property type="component" value="Chromosome"/>
</dbReference>
<dbReference type="CollecTF" id="EXPREG_00000950"/>
<dbReference type="GO" id="GO:0005829">
    <property type="term" value="C:cytosol"/>
    <property type="evidence" value="ECO:0000314"/>
    <property type="project" value="EcoCyc"/>
</dbReference>
<dbReference type="GO" id="GO:0032993">
    <property type="term" value="C:protein-DNA complex"/>
    <property type="evidence" value="ECO:0000353"/>
    <property type="project" value="CollecTF"/>
</dbReference>
<dbReference type="GO" id="GO:0001216">
    <property type="term" value="F:DNA-binding transcription activator activity"/>
    <property type="evidence" value="ECO:0000353"/>
    <property type="project" value="CollecTF"/>
</dbReference>
<dbReference type="GO" id="GO:0042802">
    <property type="term" value="F:identical protein binding"/>
    <property type="evidence" value="ECO:0000353"/>
    <property type="project" value="IntAct"/>
</dbReference>
<dbReference type="GO" id="GO:0000156">
    <property type="term" value="F:phosphorelay response regulator activity"/>
    <property type="evidence" value="ECO:0000318"/>
    <property type="project" value="GO_Central"/>
</dbReference>
<dbReference type="GO" id="GO:0000976">
    <property type="term" value="F:transcription cis-regulatory region binding"/>
    <property type="evidence" value="ECO:0000353"/>
    <property type="project" value="CollecTF"/>
</dbReference>
<dbReference type="GO" id="GO:0045893">
    <property type="term" value="P:positive regulation of DNA-templated transcription"/>
    <property type="evidence" value="ECO:0000269"/>
    <property type="project" value="CollecTF"/>
</dbReference>
<dbReference type="GO" id="GO:0006355">
    <property type="term" value="P:regulation of DNA-templated transcription"/>
    <property type="evidence" value="ECO:0000318"/>
    <property type="project" value="GO_Central"/>
</dbReference>
<dbReference type="CDD" id="cd19934">
    <property type="entry name" value="REC_OmpR_EcPhoP-like"/>
    <property type="match status" value="1"/>
</dbReference>
<dbReference type="CDD" id="cd00383">
    <property type="entry name" value="trans_reg_C"/>
    <property type="match status" value="1"/>
</dbReference>
<dbReference type="FunFam" id="3.40.50.2300:FF:000002">
    <property type="entry name" value="DNA-binding response regulator PhoP"/>
    <property type="match status" value="1"/>
</dbReference>
<dbReference type="FunFam" id="1.10.10.10:FF:000098">
    <property type="entry name" value="Two-component system response regulator PhoP"/>
    <property type="match status" value="1"/>
</dbReference>
<dbReference type="Gene3D" id="3.40.50.2300">
    <property type="match status" value="1"/>
</dbReference>
<dbReference type="Gene3D" id="6.10.250.690">
    <property type="match status" value="1"/>
</dbReference>
<dbReference type="Gene3D" id="1.10.10.10">
    <property type="entry name" value="Winged helix-like DNA-binding domain superfamily/Winged helix DNA-binding domain"/>
    <property type="match status" value="1"/>
</dbReference>
<dbReference type="InterPro" id="IPR011006">
    <property type="entry name" value="CheY-like_superfamily"/>
</dbReference>
<dbReference type="InterPro" id="IPR001867">
    <property type="entry name" value="OmpR/PhoB-type_DNA-bd"/>
</dbReference>
<dbReference type="InterPro" id="IPR001789">
    <property type="entry name" value="Sig_transdc_resp-reg_receiver"/>
</dbReference>
<dbReference type="InterPro" id="IPR039420">
    <property type="entry name" value="WalR-like"/>
</dbReference>
<dbReference type="InterPro" id="IPR036388">
    <property type="entry name" value="WH-like_DNA-bd_sf"/>
</dbReference>
<dbReference type="NCBIfam" id="NF008078">
    <property type="entry name" value="PRK10816.1"/>
    <property type="match status" value="1"/>
</dbReference>
<dbReference type="PANTHER" id="PTHR48111">
    <property type="entry name" value="REGULATOR OF RPOS"/>
    <property type="match status" value="1"/>
</dbReference>
<dbReference type="PANTHER" id="PTHR48111:SF71">
    <property type="entry name" value="TRANSCRIPTIONAL REGULATORY PROTEIN PHOP"/>
    <property type="match status" value="1"/>
</dbReference>
<dbReference type="Pfam" id="PF00072">
    <property type="entry name" value="Response_reg"/>
    <property type="match status" value="1"/>
</dbReference>
<dbReference type="Pfam" id="PF00486">
    <property type="entry name" value="Trans_reg_C"/>
    <property type="match status" value="1"/>
</dbReference>
<dbReference type="SMART" id="SM00448">
    <property type="entry name" value="REC"/>
    <property type="match status" value="1"/>
</dbReference>
<dbReference type="SMART" id="SM00862">
    <property type="entry name" value="Trans_reg_C"/>
    <property type="match status" value="1"/>
</dbReference>
<dbReference type="SUPFAM" id="SSF52172">
    <property type="entry name" value="CheY-like"/>
    <property type="match status" value="1"/>
</dbReference>
<dbReference type="PROSITE" id="PS51755">
    <property type="entry name" value="OMPR_PHOB"/>
    <property type="match status" value="1"/>
</dbReference>
<dbReference type="PROSITE" id="PS50110">
    <property type="entry name" value="RESPONSE_REGULATORY"/>
    <property type="match status" value="1"/>
</dbReference>
<keyword id="KW-0002">3D-structure</keyword>
<keyword id="KW-0010">Activator</keyword>
<keyword id="KW-0963">Cytoplasm</keyword>
<keyword id="KW-0903">Direct protein sequencing</keyword>
<keyword id="KW-0238">DNA-binding</keyword>
<keyword id="KW-0597">Phosphoprotein</keyword>
<keyword id="KW-1185">Reference proteome</keyword>
<keyword id="KW-0678">Repressor</keyword>
<keyword id="KW-0804">Transcription</keyword>
<keyword id="KW-0805">Transcription regulation</keyword>
<keyword id="KW-0902">Two-component regulatory system</keyword>